<proteinExistence type="inferred from homology"/>
<protein>
    <recommendedName>
        <fullName evidence="1">Peptide deformylase</fullName>
        <shortName evidence="1">PDF</shortName>
        <ecNumber evidence="1">3.5.1.88</ecNumber>
    </recommendedName>
    <alternativeName>
        <fullName evidence="1">Polypeptide deformylase</fullName>
    </alternativeName>
</protein>
<gene>
    <name evidence="1" type="primary">def</name>
    <name type="ordered locus">BUsg_477</name>
</gene>
<organism>
    <name type="scientific">Buchnera aphidicola subsp. Schizaphis graminum (strain Sg)</name>
    <dbReference type="NCBI Taxonomy" id="198804"/>
    <lineage>
        <taxon>Bacteria</taxon>
        <taxon>Pseudomonadati</taxon>
        <taxon>Pseudomonadota</taxon>
        <taxon>Gammaproteobacteria</taxon>
        <taxon>Enterobacterales</taxon>
        <taxon>Erwiniaceae</taxon>
        <taxon>Buchnera</taxon>
    </lineage>
</organism>
<keyword id="KW-0378">Hydrolase</keyword>
<keyword id="KW-0408">Iron</keyword>
<keyword id="KW-0479">Metal-binding</keyword>
<keyword id="KW-0648">Protein biosynthesis</keyword>
<accession>Q8K975</accession>
<dbReference type="EC" id="3.5.1.88" evidence="1"/>
<dbReference type="EMBL" id="AE013218">
    <property type="protein sequence ID" value="AAM68020.1"/>
    <property type="molecule type" value="Genomic_DNA"/>
</dbReference>
<dbReference type="RefSeq" id="WP_011053986.1">
    <property type="nucleotide sequence ID" value="NC_004061.1"/>
</dbReference>
<dbReference type="SMR" id="Q8K975"/>
<dbReference type="STRING" id="198804.BUsg_477"/>
<dbReference type="GeneID" id="93003952"/>
<dbReference type="KEGG" id="bas:BUsg_477"/>
<dbReference type="eggNOG" id="COG0242">
    <property type="taxonomic scope" value="Bacteria"/>
</dbReference>
<dbReference type="HOGENOM" id="CLU_061901_2_1_6"/>
<dbReference type="Proteomes" id="UP000000416">
    <property type="component" value="Chromosome"/>
</dbReference>
<dbReference type="GO" id="GO:0046872">
    <property type="term" value="F:metal ion binding"/>
    <property type="evidence" value="ECO:0007669"/>
    <property type="project" value="UniProtKB-KW"/>
</dbReference>
<dbReference type="GO" id="GO:0042586">
    <property type="term" value="F:peptide deformylase activity"/>
    <property type="evidence" value="ECO:0007669"/>
    <property type="project" value="UniProtKB-UniRule"/>
</dbReference>
<dbReference type="GO" id="GO:0043686">
    <property type="term" value="P:co-translational protein modification"/>
    <property type="evidence" value="ECO:0007669"/>
    <property type="project" value="TreeGrafter"/>
</dbReference>
<dbReference type="GO" id="GO:0006412">
    <property type="term" value="P:translation"/>
    <property type="evidence" value="ECO:0007669"/>
    <property type="project" value="UniProtKB-UniRule"/>
</dbReference>
<dbReference type="CDD" id="cd00487">
    <property type="entry name" value="Pep_deformylase"/>
    <property type="match status" value="1"/>
</dbReference>
<dbReference type="Gene3D" id="3.90.45.10">
    <property type="entry name" value="Peptide deformylase"/>
    <property type="match status" value="1"/>
</dbReference>
<dbReference type="HAMAP" id="MF_00163">
    <property type="entry name" value="Pep_deformylase"/>
    <property type="match status" value="1"/>
</dbReference>
<dbReference type="InterPro" id="IPR023635">
    <property type="entry name" value="Peptide_deformylase"/>
</dbReference>
<dbReference type="InterPro" id="IPR036821">
    <property type="entry name" value="Peptide_deformylase_sf"/>
</dbReference>
<dbReference type="NCBIfam" id="TIGR00079">
    <property type="entry name" value="pept_deformyl"/>
    <property type="match status" value="1"/>
</dbReference>
<dbReference type="NCBIfam" id="NF001159">
    <property type="entry name" value="PRK00150.1-3"/>
    <property type="match status" value="1"/>
</dbReference>
<dbReference type="PANTHER" id="PTHR10458">
    <property type="entry name" value="PEPTIDE DEFORMYLASE"/>
    <property type="match status" value="1"/>
</dbReference>
<dbReference type="PANTHER" id="PTHR10458:SF21">
    <property type="entry name" value="PEPTIDE DEFORMYLASE"/>
    <property type="match status" value="1"/>
</dbReference>
<dbReference type="Pfam" id="PF01327">
    <property type="entry name" value="Pep_deformylase"/>
    <property type="match status" value="1"/>
</dbReference>
<dbReference type="PIRSF" id="PIRSF004749">
    <property type="entry name" value="Pep_def"/>
    <property type="match status" value="1"/>
</dbReference>
<dbReference type="PRINTS" id="PR01576">
    <property type="entry name" value="PDEFORMYLASE"/>
</dbReference>
<dbReference type="SUPFAM" id="SSF56420">
    <property type="entry name" value="Peptide deformylase"/>
    <property type="match status" value="1"/>
</dbReference>
<evidence type="ECO:0000255" key="1">
    <source>
        <dbReference type="HAMAP-Rule" id="MF_00163"/>
    </source>
</evidence>
<reference key="1">
    <citation type="journal article" date="2002" name="Science">
        <title>50 million years of genomic stasis in endosymbiotic bacteria.</title>
        <authorList>
            <person name="Tamas I."/>
            <person name="Klasson L."/>
            <person name="Canbaeck B."/>
            <person name="Naeslund A.K."/>
            <person name="Eriksson A.-S."/>
            <person name="Wernegreen J.J."/>
            <person name="Sandstroem J.P."/>
            <person name="Moran N.A."/>
            <person name="Andersson S.G.E."/>
        </authorList>
    </citation>
    <scope>NUCLEOTIDE SEQUENCE [LARGE SCALE GENOMIC DNA]</scope>
    <source>
        <strain>Sg</strain>
    </source>
</reference>
<sequence>MSVLKILHYPDQRLRLIAKPVEKITKEIYKITNNMIDTMYQEEGIGLAATQVNIQLQIIVIHKIHAIEKNLILINPKIIEKKGSISIEEGCLSIPEYRAFVPRFNYIKIQAINLNGNTVEIEADSILSICIQHEIDHLNGKLFIDYLSELKRERILKKLIKLKKRIK</sequence>
<comment type="function">
    <text evidence="1">Removes the formyl group from the N-terminal Met of newly synthesized proteins. Requires at least a dipeptide for an efficient rate of reaction. N-terminal L-methionine is a prerequisite for activity but the enzyme has broad specificity at other positions.</text>
</comment>
<comment type="catalytic activity">
    <reaction evidence="1">
        <text>N-terminal N-formyl-L-methionyl-[peptide] + H2O = N-terminal L-methionyl-[peptide] + formate</text>
        <dbReference type="Rhea" id="RHEA:24420"/>
        <dbReference type="Rhea" id="RHEA-COMP:10639"/>
        <dbReference type="Rhea" id="RHEA-COMP:10640"/>
        <dbReference type="ChEBI" id="CHEBI:15377"/>
        <dbReference type="ChEBI" id="CHEBI:15740"/>
        <dbReference type="ChEBI" id="CHEBI:49298"/>
        <dbReference type="ChEBI" id="CHEBI:64731"/>
        <dbReference type="EC" id="3.5.1.88"/>
    </reaction>
</comment>
<comment type="cofactor">
    <cofactor evidence="1">
        <name>Fe(2+)</name>
        <dbReference type="ChEBI" id="CHEBI:29033"/>
    </cofactor>
    <text evidence="1">Binds 1 Fe(2+) ion.</text>
</comment>
<comment type="similarity">
    <text evidence="1">Belongs to the polypeptide deformylase family.</text>
</comment>
<feature type="chain" id="PRO_0000082755" description="Peptide deformylase">
    <location>
        <begin position="1"/>
        <end position="167"/>
    </location>
</feature>
<feature type="active site" evidence="1">
    <location>
        <position position="134"/>
    </location>
</feature>
<feature type="binding site" evidence="1">
    <location>
        <position position="91"/>
    </location>
    <ligand>
        <name>Fe cation</name>
        <dbReference type="ChEBI" id="CHEBI:24875"/>
    </ligand>
</feature>
<feature type="binding site" evidence="1">
    <location>
        <position position="133"/>
    </location>
    <ligand>
        <name>Fe cation</name>
        <dbReference type="ChEBI" id="CHEBI:24875"/>
    </ligand>
</feature>
<feature type="binding site" evidence="1">
    <location>
        <position position="137"/>
    </location>
    <ligand>
        <name>Fe cation</name>
        <dbReference type="ChEBI" id="CHEBI:24875"/>
    </ligand>
</feature>
<name>DEF_BUCAP</name>